<proteinExistence type="inferred from homology"/>
<sequence>MVLDGFAAHFDAYLENIVREGKSEHTVAAYRRDLEELFALLAQMPSEDVGGVPQDLSRRDFTAALRRLSQRGLNARTLARKLSSWRQYCVWLVERGLLHTDPTADIKPPKQPERVPKALPQEWLNRMLDLPVDGGDPLAVRDHALFELMYGSGLRVSEIHGLNADDVYLDEAWVHVTGKGRKQRQVPLTGKSVEALKNYLPLRQTASDGKALFTGRNGTRLSQRQIQKRLAQWAAQNGDGRHVSPHMMRHSYAGHLLQASRDIRAVQELLGHSSLSTTQIYTKLDFDHIARLYDEAHPRAKRRDE</sequence>
<accession>A1KS31</accession>
<reference key="1">
    <citation type="journal article" date="2007" name="PLoS Genet.">
        <title>Meningococcal genetic variation mechanisms viewed through comparative analysis of serogroup C strain FAM18.</title>
        <authorList>
            <person name="Bentley S.D."/>
            <person name="Vernikos G.S."/>
            <person name="Snyder L.A.S."/>
            <person name="Churcher C."/>
            <person name="Arrowsmith C."/>
            <person name="Chillingworth T."/>
            <person name="Cronin A."/>
            <person name="Davis P.H."/>
            <person name="Holroyd N.E."/>
            <person name="Jagels K."/>
            <person name="Maddison M."/>
            <person name="Moule S."/>
            <person name="Rabbinowitsch E."/>
            <person name="Sharp S."/>
            <person name="Unwin L."/>
            <person name="Whitehead S."/>
            <person name="Quail M.A."/>
            <person name="Achtman M."/>
            <person name="Barrell B.G."/>
            <person name="Saunders N.J."/>
            <person name="Parkhill J."/>
        </authorList>
    </citation>
    <scope>NUCLEOTIDE SEQUENCE [LARGE SCALE GENOMIC DNA]</scope>
    <source>
        <strain>ATCC 700532 / DSM 15464 / FAM18</strain>
    </source>
</reference>
<gene>
    <name evidence="1" type="primary">xerC</name>
    <name type="ordered locus">NMC0351</name>
</gene>
<name>XERC_NEIMF</name>
<protein>
    <recommendedName>
        <fullName evidence="1">Tyrosine recombinase XerC</fullName>
    </recommendedName>
</protein>
<comment type="function">
    <text evidence="1">Site-specific tyrosine recombinase, which acts by catalyzing the cutting and rejoining of the recombining DNA molecules. The XerC-XerD complex is essential to convert dimers of the bacterial chromosome into monomers to permit their segregation at cell division. It also contributes to the segregational stability of plasmids.</text>
</comment>
<comment type="subunit">
    <text evidence="1">Forms a cyclic heterotetrameric complex composed of two molecules of XerC and two molecules of XerD.</text>
</comment>
<comment type="subcellular location">
    <subcellularLocation>
        <location evidence="1">Cytoplasm</location>
    </subcellularLocation>
</comment>
<comment type="similarity">
    <text evidence="1">Belongs to the 'phage' integrase family. XerC subfamily.</text>
</comment>
<organism>
    <name type="scientific">Neisseria meningitidis serogroup C / serotype 2a (strain ATCC 700532 / DSM 15464 / FAM18)</name>
    <dbReference type="NCBI Taxonomy" id="272831"/>
    <lineage>
        <taxon>Bacteria</taxon>
        <taxon>Pseudomonadati</taxon>
        <taxon>Pseudomonadota</taxon>
        <taxon>Betaproteobacteria</taxon>
        <taxon>Neisseriales</taxon>
        <taxon>Neisseriaceae</taxon>
        <taxon>Neisseria</taxon>
    </lineage>
</organism>
<dbReference type="EMBL" id="AM421808">
    <property type="protein sequence ID" value="CAM09661.1"/>
    <property type="molecule type" value="Genomic_DNA"/>
</dbReference>
<dbReference type="RefSeq" id="WP_002248134.1">
    <property type="nucleotide sequence ID" value="NC_008767.1"/>
</dbReference>
<dbReference type="SMR" id="A1KS31"/>
<dbReference type="KEGG" id="nmc:NMC0351"/>
<dbReference type="HOGENOM" id="CLU_027562_9_0_4"/>
<dbReference type="Proteomes" id="UP000002286">
    <property type="component" value="Chromosome"/>
</dbReference>
<dbReference type="GO" id="GO:0005737">
    <property type="term" value="C:cytoplasm"/>
    <property type="evidence" value="ECO:0007669"/>
    <property type="project" value="UniProtKB-SubCell"/>
</dbReference>
<dbReference type="GO" id="GO:0003677">
    <property type="term" value="F:DNA binding"/>
    <property type="evidence" value="ECO:0007669"/>
    <property type="project" value="UniProtKB-KW"/>
</dbReference>
<dbReference type="GO" id="GO:0009037">
    <property type="term" value="F:tyrosine-based site-specific recombinase activity"/>
    <property type="evidence" value="ECO:0007669"/>
    <property type="project" value="UniProtKB-UniRule"/>
</dbReference>
<dbReference type="GO" id="GO:0051301">
    <property type="term" value="P:cell division"/>
    <property type="evidence" value="ECO:0007669"/>
    <property type="project" value="UniProtKB-KW"/>
</dbReference>
<dbReference type="GO" id="GO:0007059">
    <property type="term" value="P:chromosome segregation"/>
    <property type="evidence" value="ECO:0007669"/>
    <property type="project" value="UniProtKB-UniRule"/>
</dbReference>
<dbReference type="GO" id="GO:0006313">
    <property type="term" value="P:DNA transposition"/>
    <property type="evidence" value="ECO:0007669"/>
    <property type="project" value="UniProtKB-UniRule"/>
</dbReference>
<dbReference type="CDD" id="cd00798">
    <property type="entry name" value="INT_XerDC_C"/>
    <property type="match status" value="1"/>
</dbReference>
<dbReference type="Gene3D" id="1.10.150.130">
    <property type="match status" value="1"/>
</dbReference>
<dbReference type="Gene3D" id="1.10.443.10">
    <property type="entry name" value="Intergrase catalytic core"/>
    <property type="match status" value="1"/>
</dbReference>
<dbReference type="HAMAP" id="MF_01808">
    <property type="entry name" value="Recomb_XerC_XerD"/>
    <property type="match status" value="1"/>
</dbReference>
<dbReference type="InterPro" id="IPR044068">
    <property type="entry name" value="CB"/>
</dbReference>
<dbReference type="InterPro" id="IPR011010">
    <property type="entry name" value="DNA_brk_join_enz"/>
</dbReference>
<dbReference type="InterPro" id="IPR013762">
    <property type="entry name" value="Integrase-like_cat_sf"/>
</dbReference>
<dbReference type="InterPro" id="IPR002104">
    <property type="entry name" value="Integrase_catalytic"/>
</dbReference>
<dbReference type="InterPro" id="IPR010998">
    <property type="entry name" value="Integrase_recombinase_N"/>
</dbReference>
<dbReference type="InterPro" id="IPR004107">
    <property type="entry name" value="Integrase_SAM-like_N"/>
</dbReference>
<dbReference type="InterPro" id="IPR011931">
    <property type="entry name" value="Recomb_XerC"/>
</dbReference>
<dbReference type="InterPro" id="IPR023009">
    <property type="entry name" value="Tyrosine_recombinase_XerC/XerD"/>
</dbReference>
<dbReference type="InterPro" id="IPR050090">
    <property type="entry name" value="Tyrosine_recombinase_XerCD"/>
</dbReference>
<dbReference type="NCBIfam" id="TIGR02224">
    <property type="entry name" value="recomb_XerC"/>
    <property type="match status" value="1"/>
</dbReference>
<dbReference type="PANTHER" id="PTHR30349">
    <property type="entry name" value="PHAGE INTEGRASE-RELATED"/>
    <property type="match status" value="1"/>
</dbReference>
<dbReference type="PANTHER" id="PTHR30349:SF81">
    <property type="entry name" value="TYROSINE RECOMBINASE XERC"/>
    <property type="match status" value="1"/>
</dbReference>
<dbReference type="Pfam" id="PF02899">
    <property type="entry name" value="Phage_int_SAM_1"/>
    <property type="match status" value="1"/>
</dbReference>
<dbReference type="Pfam" id="PF00589">
    <property type="entry name" value="Phage_integrase"/>
    <property type="match status" value="1"/>
</dbReference>
<dbReference type="SUPFAM" id="SSF56349">
    <property type="entry name" value="DNA breaking-rejoining enzymes"/>
    <property type="match status" value="1"/>
</dbReference>
<dbReference type="PROSITE" id="PS51900">
    <property type="entry name" value="CB"/>
    <property type="match status" value="1"/>
</dbReference>
<dbReference type="PROSITE" id="PS51898">
    <property type="entry name" value="TYR_RECOMBINASE"/>
    <property type="match status" value="1"/>
</dbReference>
<evidence type="ECO:0000255" key="1">
    <source>
        <dbReference type="HAMAP-Rule" id="MF_01808"/>
    </source>
</evidence>
<evidence type="ECO:0000255" key="2">
    <source>
        <dbReference type="PROSITE-ProRule" id="PRU01246"/>
    </source>
</evidence>
<evidence type="ECO:0000255" key="3">
    <source>
        <dbReference type="PROSITE-ProRule" id="PRU01248"/>
    </source>
</evidence>
<keyword id="KW-0131">Cell cycle</keyword>
<keyword id="KW-0132">Cell division</keyword>
<keyword id="KW-0159">Chromosome partition</keyword>
<keyword id="KW-0963">Cytoplasm</keyword>
<keyword id="KW-0229">DNA integration</keyword>
<keyword id="KW-0233">DNA recombination</keyword>
<keyword id="KW-0238">DNA-binding</keyword>
<feature type="chain" id="PRO_1000070020" description="Tyrosine recombinase XerC">
    <location>
        <begin position="1"/>
        <end position="305"/>
    </location>
</feature>
<feature type="domain" description="Core-binding (CB)" evidence="3">
    <location>
        <begin position="1"/>
        <end position="93"/>
    </location>
</feature>
<feature type="domain" description="Tyr recombinase" evidence="2">
    <location>
        <begin position="114"/>
        <end position="294"/>
    </location>
</feature>
<feature type="active site" evidence="1">
    <location>
        <position position="155"/>
    </location>
</feature>
<feature type="active site" evidence="1">
    <location>
        <position position="179"/>
    </location>
</feature>
<feature type="active site" evidence="1">
    <location>
        <position position="246"/>
    </location>
</feature>
<feature type="active site" evidence="1">
    <location>
        <position position="249"/>
    </location>
</feature>
<feature type="active site" evidence="1">
    <location>
        <position position="272"/>
    </location>
</feature>
<feature type="active site" description="O-(3'-phospho-DNA)-tyrosine intermediate" evidence="1">
    <location>
        <position position="281"/>
    </location>
</feature>